<sequence>MKVDPNKEKALAAVLSQIEKQFGKGSIMKLGEDRSMDVETISTGSLSLDVALGAGGLPMGRIVEIYGPESSGKTTLTLEVIAAAQREGKTCAFIDAEHALDPIYAKKLGVDIDNLLCSQPDTGEQALEICDALTRSGAVDVIIVDSVAALTPKAEIEGEIGDSHMGLAARMMSQAMRKLAGNLKQSNTLLIFINQIRMKIGVMFGNPETTTGGNALKFYASVRLDIRRTGAIKEGDEVVGNETRVKVVKNKVAAPFKQAEFQILYGQGINRTGELVDLGVAHKLIEKAGAWYSYKGDKIGQGRANAGKYLTENPAIAAEIDKTLRELLLSNPAALSSSASDDENSEGNVDFETGEVF</sequence>
<dbReference type="EMBL" id="CP000444">
    <property type="protein sequence ID" value="ABI42195.1"/>
    <property type="molecule type" value="Genomic_DNA"/>
</dbReference>
<dbReference type="SMR" id="Q0HXG0"/>
<dbReference type="KEGG" id="shm:Shewmr7_1196"/>
<dbReference type="HOGENOM" id="CLU_040469_3_2_6"/>
<dbReference type="GO" id="GO:0005829">
    <property type="term" value="C:cytosol"/>
    <property type="evidence" value="ECO:0007669"/>
    <property type="project" value="TreeGrafter"/>
</dbReference>
<dbReference type="GO" id="GO:0005524">
    <property type="term" value="F:ATP binding"/>
    <property type="evidence" value="ECO:0007669"/>
    <property type="project" value="UniProtKB-UniRule"/>
</dbReference>
<dbReference type="GO" id="GO:0016887">
    <property type="term" value="F:ATP hydrolysis activity"/>
    <property type="evidence" value="ECO:0007669"/>
    <property type="project" value="InterPro"/>
</dbReference>
<dbReference type="GO" id="GO:0140664">
    <property type="term" value="F:ATP-dependent DNA damage sensor activity"/>
    <property type="evidence" value="ECO:0007669"/>
    <property type="project" value="InterPro"/>
</dbReference>
<dbReference type="GO" id="GO:0003684">
    <property type="term" value="F:damaged DNA binding"/>
    <property type="evidence" value="ECO:0007669"/>
    <property type="project" value="UniProtKB-UniRule"/>
</dbReference>
<dbReference type="GO" id="GO:0003697">
    <property type="term" value="F:single-stranded DNA binding"/>
    <property type="evidence" value="ECO:0007669"/>
    <property type="project" value="UniProtKB-UniRule"/>
</dbReference>
<dbReference type="GO" id="GO:0006310">
    <property type="term" value="P:DNA recombination"/>
    <property type="evidence" value="ECO:0007669"/>
    <property type="project" value="UniProtKB-UniRule"/>
</dbReference>
<dbReference type="GO" id="GO:0006281">
    <property type="term" value="P:DNA repair"/>
    <property type="evidence" value="ECO:0007669"/>
    <property type="project" value="UniProtKB-UniRule"/>
</dbReference>
<dbReference type="GO" id="GO:0009432">
    <property type="term" value="P:SOS response"/>
    <property type="evidence" value="ECO:0007669"/>
    <property type="project" value="UniProtKB-UniRule"/>
</dbReference>
<dbReference type="CDD" id="cd00983">
    <property type="entry name" value="RecA"/>
    <property type="match status" value="1"/>
</dbReference>
<dbReference type="FunFam" id="3.40.50.300:FF:000087">
    <property type="entry name" value="Recombinase RecA"/>
    <property type="match status" value="1"/>
</dbReference>
<dbReference type="Gene3D" id="3.40.50.300">
    <property type="entry name" value="P-loop containing nucleotide triphosphate hydrolases"/>
    <property type="match status" value="1"/>
</dbReference>
<dbReference type="HAMAP" id="MF_00268">
    <property type="entry name" value="RecA"/>
    <property type="match status" value="1"/>
</dbReference>
<dbReference type="InterPro" id="IPR003593">
    <property type="entry name" value="AAA+_ATPase"/>
</dbReference>
<dbReference type="InterPro" id="IPR013765">
    <property type="entry name" value="DNA_recomb/repair_RecA"/>
</dbReference>
<dbReference type="InterPro" id="IPR020584">
    <property type="entry name" value="DNA_recomb/repair_RecA_CS"/>
</dbReference>
<dbReference type="InterPro" id="IPR027417">
    <property type="entry name" value="P-loop_NTPase"/>
</dbReference>
<dbReference type="InterPro" id="IPR049261">
    <property type="entry name" value="RecA-like_C"/>
</dbReference>
<dbReference type="InterPro" id="IPR049428">
    <property type="entry name" value="RecA-like_N"/>
</dbReference>
<dbReference type="InterPro" id="IPR020588">
    <property type="entry name" value="RecA_ATP-bd"/>
</dbReference>
<dbReference type="InterPro" id="IPR023400">
    <property type="entry name" value="RecA_C_sf"/>
</dbReference>
<dbReference type="InterPro" id="IPR020587">
    <property type="entry name" value="RecA_monomer-monomer_interface"/>
</dbReference>
<dbReference type="NCBIfam" id="TIGR02012">
    <property type="entry name" value="tigrfam_recA"/>
    <property type="match status" value="1"/>
</dbReference>
<dbReference type="PANTHER" id="PTHR45900:SF1">
    <property type="entry name" value="MITOCHONDRIAL DNA REPAIR PROTEIN RECA HOMOLOG-RELATED"/>
    <property type="match status" value="1"/>
</dbReference>
<dbReference type="PANTHER" id="PTHR45900">
    <property type="entry name" value="RECA"/>
    <property type="match status" value="1"/>
</dbReference>
<dbReference type="Pfam" id="PF00154">
    <property type="entry name" value="RecA"/>
    <property type="match status" value="1"/>
</dbReference>
<dbReference type="Pfam" id="PF21096">
    <property type="entry name" value="RecA_C"/>
    <property type="match status" value="1"/>
</dbReference>
<dbReference type="PRINTS" id="PR00142">
    <property type="entry name" value="RECA"/>
</dbReference>
<dbReference type="SMART" id="SM00382">
    <property type="entry name" value="AAA"/>
    <property type="match status" value="1"/>
</dbReference>
<dbReference type="SUPFAM" id="SSF52540">
    <property type="entry name" value="P-loop containing nucleoside triphosphate hydrolases"/>
    <property type="match status" value="1"/>
</dbReference>
<dbReference type="SUPFAM" id="SSF54752">
    <property type="entry name" value="RecA protein, C-terminal domain"/>
    <property type="match status" value="1"/>
</dbReference>
<dbReference type="PROSITE" id="PS00321">
    <property type="entry name" value="RECA_1"/>
    <property type="match status" value="1"/>
</dbReference>
<dbReference type="PROSITE" id="PS50162">
    <property type="entry name" value="RECA_2"/>
    <property type="match status" value="1"/>
</dbReference>
<dbReference type="PROSITE" id="PS50163">
    <property type="entry name" value="RECA_3"/>
    <property type="match status" value="1"/>
</dbReference>
<gene>
    <name evidence="1" type="primary">recA</name>
    <name type="ordered locus">Shewmr7_1196</name>
</gene>
<evidence type="ECO:0000255" key="1">
    <source>
        <dbReference type="HAMAP-Rule" id="MF_00268"/>
    </source>
</evidence>
<evidence type="ECO:0000256" key="2">
    <source>
        <dbReference type="SAM" id="MobiDB-lite"/>
    </source>
</evidence>
<proteinExistence type="inferred from homology"/>
<comment type="function">
    <text evidence="1">Can catalyze the hydrolysis of ATP in the presence of single-stranded DNA, the ATP-dependent uptake of single-stranded DNA by duplex DNA, and the ATP-dependent hybridization of homologous single-stranded DNAs. It interacts with LexA causing its activation and leading to its autocatalytic cleavage.</text>
</comment>
<comment type="subcellular location">
    <subcellularLocation>
        <location evidence="1">Cytoplasm</location>
    </subcellularLocation>
</comment>
<comment type="similarity">
    <text evidence="1">Belongs to the RecA family.</text>
</comment>
<organism>
    <name type="scientific">Shewanella sp. (strain MR-7)</name>
    <dbReference type="NCBI Taxonomy" id="60481"/>
    <lineage>
        <taxon>Bacteria</taxon>
        <taxon>Pseudomonadati</taxon>
        <taxon>Pseudomonadota</taxon>
        <taxon>Gammaproteobacteria</taxon>
        <taxon>Alteromonadales</taxon>
        <taxon>Shewanellaceae</taxon>
        <taxon>Shewanella</taxon>
    </lineage>
</organism>
<name>RECA_SHESR</name>
<protein>
    <recommendedName>
        <fullName evidence="1">Protein RecA</fullName>
    </recommendedName>
    <alternativeName>
        <fullName evidence="1">Recombinase A</fullName>
    </alternativeName>
</protein>
<reference key="1">
    <citation type="submission" date="2006-08" db="EMBL/GenBank/DDBJ databases">
        <title>Complete sequence of chromosome 1 of Shewanella sp. MR-7.</title>
        <authorList>
            <person name="Copeland A."/>
            <person name="Lucas S."/>
            <person name="Lapidus A."/>
            <person name="Barry K."/>
            <person name="Detter J.C."/>
            <person name="Glavina del Rio T."/>
            <person name="Hammon N."/>
            <person name="Israni S."/>
            <person name="Dalin E."/>
            <person name="Tice H."/>
            <person name="Pitluck S."/>
            <person name="Kiss H."/>
            <person name="Brettin T."/>
            <person name="Bruce D."/>
            <person name="Han C."/>
            <person name="Tapia R."/>
            <person name="Gilna P."/>
            <person name="Schmutz J."/>
            <person name="Larimer F."/>
            <person name="Land M."/>
            <person name="Hauser L."/>
            <person name="Kyrpides N."/>
            <person name="Mikhailova N."/>
            <person name="Nealson K."/>
            <person name="Konstantinidis K."/>
            <person name="Klappenbach J."/>
            <person name="Tiedje J."/>
            <person name="Richardson P."/>
        </authorList>
    </citation>
    <scope>NUCLEOTIDE SEQUENCE [LARGE SCALE GENOMIC DNA]</scope>
    <source>
        <strain>MR-7</strain>
    </source>
</reference>
<feature type="chain" id="PRO_1000047999" description="Protein RecA">
    <location>
        <begin position="1"/>
        <end position="357"/>
    </location>
</feature>
<feature type="region of interest" description="Disordered" evidence="2">
    <location>
        <begin position="335"/>
        <end position="357"/>
    </location>
</feature>
<feature type="binding site" evidence="1">
    <location>
        <begin position="67"/>
        <end position="74"/>
    </location>
    <ligand>
        <name>ATP</name>
        <dbReference type="ChEBI" id="CHEBI:30616"/>
    </ligand>
</feature>
<keyword id="KW-0067">ATP-binding</keyword>
<keyword id="KW-0963">Cytoplasm</keyword>
<keyword id="KW-0227">DNA damage</keyword>
<keyword id="KW-0233">DNA recombination</keyword>
<keyword id="KW-0234">DNA repair</keyword>
<keyword id="KW-0238">DNA-binding</keyword>
<keyword id="KW-0547">Nucleotide-binding</keyword>
<keyword id="KW-0742">SOS response</keyword>
<accession>Q0HXG0</accession>